<dbReference type="EC" id="6.3.4.20" evidence="1"/>
<dbReference type="EMBL" id="CP000529">
    <property type="protein sequence ID" value="ABM35955.1"/>
    <property type="status" value="ALT_INIT"/>
    <property type="molecule type" value="Genomic_DNA"/>
</dbReference>
<dbReference type="RefSeq" id="WP_041376964.1">
    <property type="nucleotide sequence ID" value="NC_008781.1"/>
</dbReference>
<dbReference type="SMR" id="A1VJX7"/>
<dbReference type="STRING" id="365044.Pnap_0636"/>
<dbReference type="KEGG" id="pna:Pnap_0636"/>
<dbReference type="eggNOG" id="COG0603">
    <property type="taxonomic scope" value="Bacteria"/>
</dbReference>
<dbReference type="HOGENOM" id="CLU_081854_0_0_4"/>
<dbReference type="OrthoDB" id="9789567at2"/>
<dbReference type="UniPathway" id="UPA00391"/>
<dbReference type="Proteomes" id="UP000000644">
    <property type="component" value="Chromosome"/>
</dbReference>
<dbReference type="GO" id="GO:0005524">
    <property type="term" value="F:ATP binding"/>
    <property type="evidence" value="ECO:0007669"/>
    <property type="project" value="UniProtKB-UniRule"/>
</dbReference>
<dbReference type="GO" id="GO:0016879">
    <property type="term" value="F:ligase activity, forming carbon-nitrogen bonds"/>
    <property type="evidence" value="ECO:0007669"/>
    <property type="project" value="UniProtKB-UniRule"/>
</dbReference>
<dbReference type="GO" id="GO:0008270">
    <property type="term" value="F:zinc ion binding"/>
    <property type="evidence" value="ECO:0007669"/>
    <property type="project" value="UniProtKB-UniRule"/>
</dbReference>
<dbReference type="GO" id="GO:0008616">
    <property type="term" value="P:queuosine biosynthetic process"/>
    <property type="evidence" value="ECO:0007669"/>
    <property type="project" value="UniProtKB-UniRule"/>
</dbReference>
<dbReference type="CDD" id="cd01995">
    <property type="entry name" value="QueC-like"/>
    <property type="match status" value="1"/>
</dbReference>
<dbReference type="Gene3D" id="3.40.50.620">
    <property type="entry name" value="HUPs"/>
    <property type="match status" value="1"/>
</dbReference>
<dbReference type="HAMAP" id="MF_01633">
    <property type="entry name" value="QueC"/>
    <property type="match status" value="1"/>
</dbReference>
<dbReference type="InterPro" id="IPR018317">
    <property type="entry name" value="QueC"/>
</dbReference>
<dbReference type="InterPro" id="IPR014729">
    <property type="entry name" value="Rossmann-like_a/b/a_fold"/>
</dbReference>
<dbReference type="NCBIfam" id="TIGR00364">
    <property type="entry name" value="7-cyano-7-deazaguanine synthase QueC"/>
    <property type="match status" value="1"/>
</dbReference>
<dbReference type="PANTHER" id="PTHR42914">
    <property type="entry name" value="7-CYANO-7-DEAZAGUANINE SYNTHASE"/>
    <property type="match status" value="1"/>
</dbReference>
<dbReference type="PANTHER" id="PTHR42914:SF1">
    <property type="entry name" value="7-CYANO-7-DEAZAGUANINE SYNTHASE"/>
    <property type="match status" value="1"/>
</dbReference>
<dbReference type="Pfam" id="PF06508">
    <property type="entry name" value="QueC"/>
    <property type="match status" value="1"/>
</dbReference>
<dbReference type="PIRSF" id="PIRSF006293">
    <property type="entry name" value="ExsB"/>
    <property type="match status" value="1"/>
</dbReference>
<dbReference type="SUPFAM" id="SSF52402">
    <property type="entry name" value="Adenine nucleotide alpha hydrolases-like"/>
    <property type="match status" value="1"/>
</dbReference>
<sequence length="239" mass="26495">MPAPVSRAHTSALVLFSGGQDSTTCLAQALAKYERVETIAFDYGQRHKVELQARLNVLRELKSQFPQWAAKLGEDHLLDLAVLGQVSDCSLTRDVAFKMESSGLPNTFVPGRNLLFLTLAAALAYRRDLQVLVTGVCETDFSGYPDCRDDTMKAMQLALSLGMDKRFLIETPLMWIDKADTWALAESLGGQPLVELIIEHTHTCYLGDRIHRHAWGYGCGQCPACELRARGYARYAEAA</sequence>
<organism>
    <name type="scientific">Polaromonas naphthalenivorans (strain CJ2)</name>
    <dbReference type="NCBI Taxonomy" id="365044"/>
    <lineage>
        <taxon>Bacteria</taxon>
        <taxon>Pseudomonadati</taxon>
        <taxon>Pseudomonadota</taxon>
        <taxon>Betaproteobacteria</taxon>
        <taxon>Burkholderiales</taxon>
        <taxon>Comamonadaceae</taxon>
        <taxon>Polaromonas</taxon>
    </lineage>
</organism>
<gene>
    <name evidence="1" type="primary">queC</name>
    <name type="ordered locus">Pnap_0636</name>
</gene>
<evidence type="ECO:0000255" key="1">
    <source>
        <dbReference type="HAMAP-Rule" id="MF_01633"/>
    </source>
</evidence>
<evidence type="ECO:0000305" key="2"/>
<accession>A1VJX7</accession>
<feature type="chain" id="PRO_0000336928" description="7-cyano-7-deazaguanine synthase">
    <location>
        <begin position="1"/>
        <end position="239"/>
    </location>
</feature>
<feature type="binding site" evidence="1">
    <location>
        <begin position="16"/>
        <end position="26"/>
    </location>
    <ligand>
        <name>ATP</name>
        <dbReference type="ChEBI" id="CHEBI:30616"/>
    </ligand>
</feature>
<feature type="binding site" evidence="1">
    <location>
        <position position="204"/>
    </location>
    <ligand>
        <name>Zn(2+)</name>
        <dbReference type="ChEBI" id="CHEBI:29105"/>
    </ligand>
</feature>
<feature type="binding site" evidence="1">
    <location>
        <position position="219"/>
    </location>
    <ligand>
        <name>Zn(2+)</name>
        <dbReference type="ChEBI" id="CHEBI:29105"/>
    </ligand>
</feature>
<feature type="binding site" evidence="1">
    <location>
        <position position="222"/>
    </location>
    <ligand>
        <name>Zn(2+)</name>
        <dbReference type="ChEBI" id="CHEBI:29105"/>
    </ligand>
</feature>
<feature type="binding site" evidence="1">
    <location>
        <position position="225"/>
    </location>
    <ligand>
        <name>Zn(2+)</name>
        <dbReference type="ChEBI" id="CHEBI:29105"/>
    </ligand>
</feature>
<keyword id="KW-0067">ATP-binding</keyword>
<keyword id="KW-0436">Ligase</keyword>
<keyword id="KW-0479">Metal-binding</keyword>
<keyword id="KW-0547">Nucleotide-binding</keyword>
<keyword id="KW-0671">Queuosine biosynthesis</keyword>
<keyword id="KW-1185">Reference proteome</keyword>
<keyword id="KW-0862">Zinc</keyword>
<protein>
    <recommendedName>
        <fullName evidence="1">7-cyano-7-deazaguanine synthase</fullName>
        <ecNumber evidence="1">6.3.4.20</ecNumber>
    </recommendedName>
    <alternativeName>
        <fullName evidence="1">7-cyano-7-carbaguanine synthase</fullName>
    </alternativeName>
    <alternativeName>
        <fullName evidence="1">PreQ(0) synthase</fullName>
    </alternativeName>
    <alternativeName>
        <fullName evidence="1">Queuosine biosynthesis protein QueC</fullName>
    </alternativeName>
</protein>
<proteinExistence type="inferred from homology"/>
<reference key="1">
    <citation type="journal article" date="2009" name="Environ. Microbiol.">
        <title>The genome of Polaromonas naphthalenivorans strain CJ2, isolated from coal tar-contaminated sediment, reveals physiological and metabolic versatility and evolution through extensive horizontal gene transfer.</title>
        <authorList>
            <person name="Yagi J.M."/>
            <person name="Sims D."/>
            <person name="Brettin T."/>
            <person name="Bruce D."/>
            <person name="Madsen E.L."/>
        </authorList>
    </citation>
    <scope>NUCLEOTIDE SEQUENCE [LARGE SCALE GENOMIC DNA]</scope>
    <source>
        <strain>CJ2</strain>
    </source>
</reference>
<name>QUEC_POLNA</name>
<comment type="function">
    <text evidence="1">Catalyzes the ATP-dependent conversion of 7-carboxy-7-deazaguanine (CDG) to 7-cyano-7-deazaguanine (preQ(0)).</text>
</comment>
<comment type="catalytic activity">
    <reaction evidence="1">
        <text>7-carboxy-7-deazaguanine + NH4(+) + ATP = 7-cyano-7-deazaguanine + ADP + phosphate + H2O + H(+)</text>
        <dbReference type="Rhea" id="RHEA:27982"/>
        <dbReference type="ChEBI" id="CHEBI:15377"/>
        <dbReference type="ChEBI" id="CHEBI:15378"/>
        <dbReference type="ChEBI" id="CHEBI:28938"/>
        <dbReference type="ChEBI" id="CHEBI:30616"/>
        <dbReference type="ChEBI" id="CHEBI:43474"/>
        <dbReference type="ChEBI" id="CHEBI:45075"/>
        <dbReference type="ChEBI" id="CHEBI:61036"/>
        <dbReference type="ChEBI" id="CHEBI:456216"/>
        <dbReference type="EC" id="6.3.4.20"/>
    </reaction>
</comment>
<comment type="cofactor">
    <cofactor evidence="1">
        <name>Zn(2+)</name>
        <dbReference type="ChEBI" id="CHEBI:29105"/>
    </cofactor>
    <text evidence="1">Binds 1 zinc ion per subunit.</text>
</comment>
<comment type="pathway">
    <text evidence="1">Purine metabolism; 7-cyano-7-deazaguanine biosynthesis.</text>
</comment>
<comment type="similarity">
    <text evidence="1">Belongs to the QueC family.</text>
</comment>
<comment type="sequence caution" evidence="2">
    <conflict type="erroneous initiation">
        <sequence resource="EMBL-CDS" id="ABM35955"/>
    </conflict>
</comment>